<accession>C0MGG9</accession>
<protein>
    <recommendedName>
        <fullName evidence="1">Tyrosine recombinase XerD-like</fullName>
    </recommendedName>
</protein>
<proteinExistence type="inferred from homology"/>
<keyword id="KW-0963">Cytoplasm</keyword>
<keyword id="KW-0229">DNA integration</keyword>
<keyword id="KW-0233">DNA recombination</keyword>
<keyword id="KW-0238">DNA-binding</keyword>
<comment type="function">
    <text evidence="1">Putative tyrosine recombinase. Not involved in the cutting and rejoining of the recombining DNA molecules on dif(SL) site.</text>
</comment>
<comment type="subcellular location">
    <subcellularLocation>
        <location evidence="1">Cytoplasm</location>
    </subcellularLocation>
</comment>
<comment type="similarity">
    <text evidence="1">Belongs to the 'phage' integrase family. XerD-like subfamily.</text>
</comment>
<evidence type="ECO:0000255" key="1">
    <source>
        <dbReference type="HAMAP-Rule" id="MF_01817"/>
    </source>
</evidence>
<evidence type="ECO:0000255" key="2">
    <source>
        <dbReference type="PROSITE-ProRule" id="PRU01246"/>
    </source>
</evidence>
<evidence type="ECO:0000255" key="3">
    <source>
        <dbReference type="PROSITE-ProRule" id="PRU01248"/>
    </source>
</evidence>
<organism>
    <name type="scientific">Streptococcus equi subsp. zooepidemicus (strain H70)</name>
    <dbReference type="NCBI Taxonomy" id="553483"/>
    <lineage>
        <taxon>Bacteria</taxon>
        <taxon>Bacillati</taxon>
        <taxon>Bacillota</taxon>
        <taxon>Bacilli</taxon>
        <taxon>Lactobacillales</taxon>
        <taxon>Streptococcaceae</taxon>
        <taxon>Streptococcus</taxon>
    </lineage>
</organism>
<dbReference type="EMBL" id="FM204884">
    <property type="protein sequence ID" value="CAW98150.1"/>
    <property type="molecule type" value="Genomic_DNA"/>
</dbReference>
<dbReference type="SMR" id="C0MGG9"/>
<dbReference type="KEGG" id="seq:SZO_03290"/>
<dbReference type="PATRIC" id="fig|40041.11.peg.353"/>
<dbReference type="eggNOG" id="COG0582">
    <property type="taxonomic scope" value="Bacteria"/>
</dbReference>
<dbReference type="HOGENOM" id="CLU_1128554_0_0_9"/>
<dbReference type="Proteomes" id="UP000001368">
    <property type="component" value="Chromosome"/>
</dbReference>
<dbReference type="GO" id="GO:0005737">
    <property type="term" value="C:cytoplasm"/>
    <property type="evidence" value="ECO:0007669"/>
    <property type="project" value="UniProtKB-SubCell"/>
</dbReference>
<dbReference type="GO" id="GO:0003677">
    <property type="term" value="F:DNA binding"/>
    <property type="evidence" value="ECO:0007669"/>
    <property type="project" value="UniProtKB-KW"/>
</dbReference>
<dbReference type="GO" id="GO:0009037">
    <property type="term" value="F:tyrosine-based site-specific recombinase activity"/>
    <property type="evidence" value="ECO:0007669"/>
    <property type="project" value="UniProtKB-UniRule"/>
</dbReference>
<dbReference type="GO" id="GO:0006313">
    <property type="term" value="P:DNA transposition"/>
    <property type="evidence" value="ECO:0007669"/>
    <property type="project" value="UniProtKB-UniRule"/>
</dbReference>
<dbReference type="CDD" id="cd01190">
    <property type="entry name" value="INT_StrepXerD_C_like"/>
    <property type="match status" value="1"/>
</dbReference>
<dbReference type="Gene3D" id="1.10.150.130">
    <property type="match status" value="1"/>
</dbReference>
<dbReference type="Gene3D" id="1.10.443.10">
    <property type="entry name" value="Intergrase catalytic core"/>
    <property type="match status" value="1"/>
</dbReference>
<dbReference type="HAMAP" id="MF_01817">
    <property type="entry name" value="Recomb_XerD_like"/>
    <property type="match status" value="1"/>
</dbReference>
<dbReference type="InterPro" id="IPR044068">
    <property type="entry name" value="CB"/>
</dbReference>
<dbReference type="InterPro" id="IPR011010">
    <property type="entry name" value="DNA_brk_join_enz"/>
</dbReference>
<dbReference type="InterPro" id="IPR013762">
    <property type="entry name" value="Integrase-like_cat_sf"/>
</dbReference>
<dbReference type="InterPro" id="IPR002104">
    <property type="entry name" value="Integrase_catalytic"/>
</dbReference>
<dbReference type="InterPro" id="IPR010998">
    <property type="entry name" value="Integrase_recombinase_N"/>
</dbReference>
<dbReference type="InterPro" id="IPR004107">
    <property type="entry name" value="Integrase_SAM-like_N"/>
</dbReference>
<dbReference type="InterPro" id="IPR020876">
    <property type="entry name" value="Tyrosine_recombinase_XerD-like"/>
</dbReference>
<dbReference type="NCBIfam" id="NF002685">
    <property type="entry name" value="PRK02436.1"/>
    <property type="match status" value="1"/>
</dbReference>
<dbReference type="Pfam" id="PF02899">
    <property type="entry name" value="Phage_int_SAM_1"/>
    <property type="match status" value="1"/>
</dbReference>
<dbReference type="SUPFAM" id="SSF56349">
    <property type="entry name" value="DNA breaking-rejoining enzymes"/>
    <property type="match status" value="1"/>
</dbReference>
<dbReference type="SUPFAM" id="SSF47823">
    <property type="entry name" value="lambda integrase-like, N-terminal domain"/>
    <property type="match status" value="1"/>
</dbReference>
<dbReference type="PROSITE" id="PS51900">
    <property type="entry name" value="CB"/>
    <property type="match status" value="1"/>
</dbReference>
<dbReference type="PROSITE" id="PS51898">
    <property type="entry name" value="TYR_RECOMBINASE"/>
    <property type="match status" value="1"/>
</dbReference>
<reference key="1">
    <citation type="journal article" date="2009" name="PLoS Pathog.">
        <title>Genomic evidence for the evolution of Streptococcus equi: host restriction, increased virulence, and genetic exchange with human pathogens.</title>
        <authorList>
            <person name="Holden M.T.G."/>
            <person name="Heather Z."/>
            <person name="Paillot R."/>
            <person name="Steward K.F."/>
            <person name="Webb K."/>
            <person name="Ainslie F."/>
            <person name="Jourdan T."/>
            <person name="Bason N.C."/>
            <person name="Holroyd N.E."/>
            <person name="Mungall K."/>
            <person name="Quail M.A."/>
            <person name="Sanders M."/>
            <person name="Simmonds M."/>
            <person name="Willey D."/>
            <person name="Brooks K."/>
            <person name="Aanensen D.M."/>
            <person name="Spratt B.G."/>
            <person name="Jolley K.A."/>
            <person name="Maiden M.C.J."/>
            <person name="Kehoe M."/>
            <person name="Chanter N."/>
            <person name="Bentley S.D."/>
            <person name="Robinson C."/>
            <person name="Maskell D.J."/>
            <person name="Parkhill J."/>
            <person name="Waller A.S."/>
        </authorList>
    </citation>
    <scope>NUCLEOTIDE SEQUENCE [LARGE SCALE GENOMIC DNA]</scope>
    <source>
        <strain>H70</strain>
    </source>
</reference>
<feature type="chain" id="PRO_1000216004" description="Tyrosine recombinase XerD-like">
    <location>
        <begin position="1"/>
        <end position="248"/>
    </location>
</feature>
<feature type="domain" description="Core-binding (CB)" evidence="3">
    <location>
        <begin position="1"/>
        <end position="72"/>
    </location>
</feature>
<feature type="domain" description="Tyr recombinase" evidence="2">
    <location>
        <begin position="92"/>
        <end position="248"/>
    </location>
</feature>
<feature type="active site" evidence="2">
    <location>
        <position position="213"/>
    </location>
</feature>
<feature type="active site" description="O-(3'-phospho-DNA)-tyrosine intermediate" evidence="2">
    <location>
        <position position="245"/>
    </location>
</feature>
<sequence length="248" mass="28441">MIAFIEPFLASKSLANNSQQAYRYDLRQFCQQVGQRINPETLALYQQSLSSLTAAAKKRKLSTVNQFLYYLYQQRVLADYFKMDDRIEASFSLKPQLTRLDTSAFYAETAFLKGQLIALLILELGLTPSEIAGLRLADFDLGLQVLRLQSHRGIRVMTLSRTLLPFLERAAEAQQLYLFDHDAKPFSRQWFFNQLRDFLESIGCAELSAQSLREQFILNEKAAGKSIIEVAQLLGLKSPITLEKYYKM</sequence>
<name>XERDL_STRS7</name>
<gene>
    <name type="ordered locus">SZO_03290</name>
</gene>